<proteinExistence type="inferred from homology"/>
<feature type="chain" id="PRO_0000313447" description="DNA ligase">
    <location>
        <begin position="1"/>
        <end position="667"/>
    </location>
</feature>
<feature type="domain" description="BRCT" evidence="1">
    <location>
        <begin position="586"/>
        <end position="667"/>
    </location>
</feature>
<feature type="active site" description="N6-AMP-lysine intermediate" evidence="1">
    <location>
        <position position="112"/>
    </location>
</feature>
<feature type="binding site" evidence="1">
    <location>
        <begin position="32"/>
        <end position="36"/>
    </location>
    <ligand>
        <name>NAD(+)</name>
        <dbReference type="ChEBI" id="CHEBI:57540"/>
    </ligand>
</feature>
<feature type="binding site" evidence="1">
    <location>
        <begin position="81"/>
        <end position="82"/>
    </location>
    <ligand>
        <name>NAD(+)</name>
        <dbReference type="ChEBI" id="CHEBI:57540"/>
    </ligand>
</feature>
<feature type="binding site" evidence="1">
    <location>
        <position position="110"/>
    </location>
    <ligand>
        <name>NAD(+)</name>
        <dbReference type="ChEBI" id="CHEBI:57540"/>
    </ligand>
</feature>
<feature type="binding site" evidence="1">
    <location>
        <position position="133"/>
    </location>
    <ligand>
        <name>NAD(+)</name>
        <dbReference type="ChEBI" id="CHEBI:57540"/>
    </ligand>
</feature>
<feature type="binding site" evidence="1">
    <location>
        <position position="167"/>
    </location>
    <ligand>
        <name>NAD(+)</name>
        <dbReference type="ChEBI" id="CHEBI:57540"/>
    </ligand>
</feature>
<feature type="binding site" evidence="1">
    <location>
        <position position="283"/>
    </location>
    <ligand>
        <name>NAD(+)</name>
        <dbReference type="ChEBI" id="CHEBI:57540"/>
    </ligand>
</feature>
<feature type="binding site" evidence="1">
    <location>
        <position position="307"/>
    </location>
    <ligand>
        <name>NAD(+)</name>
        <dbReference type="ChEBI" id="CHEBI:57540"/>
    </ligand>
</feature>
<feature type="binding site" evidence="1">
    <location>
        <position position="401"/>
    </location>
    <ligand>
        <name>Zn(2+)</name>
        <dbReference type="ChEBI" id="CHEBI:29105"/>
    </ligand>
</feature>
<feature type="binding site" evidence="1">
    <location>
        <position position="404"/>
    </location>
    <ligand>
        <name>Zn(2+)</name>
        <dbReference type="ChEBI" id="CHEBI:29105"/>
    </ligand>
</feature>
<feature type="binding site" evidence="1">
    <location>
        <position position="419"/>
    </location>
    <ligand>
        <name>Zn(2+)</name>
        <dbReference type="ChEBI" id="CHEBI:29105"/>
    </ligand>
</feature>
<feature type="binding site" evidence="1">
    <location>
        <position position="424"/>
    </location>
    <ligand>
        <name>Zn(2+)</name>
        <dbReference type="ChEBI" id="CHEBI:29105"/>
    </ligand>
</feature>
<organism>
    <name type="scientific">Staphylococcus aureus (strain Mu3 / ATCC 700698)</name>
    <dbReference type="NCBI Taxonomy" id="418127"/>
    <lineage>
        <taxon>Bacteria</taxon>
        <taxon>Bacillati</taxon>
        <taxon>Bacillota</taxon>
        <taxon>Bacilli</taxon>
        <taxon>Bacillales</taxon>
        <taxon>Staphylococcaceae</taxon>
        <taxon>Staphylococcus</taxon>
    </lineage>
</organism>
<name>DNLJ_STAA1</name>
<accession>A7X432</accession>
<protein>
    <recommendedName>
        <fullName evidence="1">DNA ligase</fullName>
        <ecNumber evidence="1">6.5.1.2</ecNumber>
    </recommendedName>
    <alternativeName>
        <fullName evidence="1">Polydeoxyribonucleotide synthase [NAD(+)]</fullName>
    </alternativeName>
</protein>
<gene>
    <name evidence="1" type="primary">ligA</name>
    <name type="ordered locus">SAHV_1889</name>
</gene>
<evidence type="ECO:0000255" key="1">
    <source>
        <dbReference type="HAMAP-Rule" id="MF_01588"/>
    </source>
</evidence>
<sequence>MADLSSRVNELHDLLNQYSYEYYVEDNPSVPDSEYDKLLHELIKIEEEHPEYKTVDSPTVRVGGEAQASFKKVNHDTPMLSLGNAFNEDDLRKFDQRIREQIGNVEYMCELKIDGLAVSLKYVDGYFVQGLTRGDGTTGEDITENLKTIHAIPLKMKEPLNVEVRGEAYMPRRSFLRLNEEKEKNDEQLFANPRNAAAGSLRQLDSKLTAKRKLSVFIYSVNDFTDFNARSQSEALDELDKLGFTTNKNRARVNNIDGVLEYIEKWTSQRESLPYDIDGIVIKVNDLDQQDEMGFTQKSPRWAIAYKFPAEEVVTKLLDIELSIGRTGVVTPTAILEPVKVAGTTVSRASLHNEDLIHDRDIRIGDSVVVKKAGDIIPEVVRSIPERRPEDAVTYHMPTHCPSCGHELVRIEGEVALRCINPKCQAQLVEGLIHFVSRQAMNIDGLGTKIIQQLYQSELIKDVADIFYLTEEDLLPLDRMGQKKVDNLLAAIQQAKDNSLENLLFGLGIRHLGVKASQVLAEKYETIDRLLTVTEAELVEIHDIGDKVAQSVVTYLENEDIRALIQKLKDKHVNMIYKGIKTSDIEGHPEFSGKTIVLTGKLHQMTRNEASKWLASQGAKVTSSVTKNTDVVIAGEDAGSKLTKAQSLGIEIWTEQQFVDKQNELNS</sequence>
<dbReference type="EC" id="6.5.1.2" evidence="1"/>
<dbReference type="EMBL" id="AP009324">
    <property type="protein sequence ID" value="BAF78772.1"/>
    <property type="molecule type" value="Genomic_DNA"/>
</dbReference>
<dbReference type="RefSeq" id="WP_000774556.1">
    <property type="nucleotide sequence ID" value="NC_009782.1"/>
</dbReference>
<dbReference type="SMR" id="A7X432"/>
<dbReference type="KEGG" id="saw:SAHV_1889"/>
<dbReference type="HOGENOM" id="CLU_007764_2_1_9"/>
<dbReference type="GO" id="GO:0005829">
    <property type="term" value="C:cytosol"/>
    <property type="evidence" value="ECO:0007669"/>
    <property type="project" value="TreeGrafter"/>
</dbReference>
<dbReference type="GO" id="GO:0003677">
    <property type="term" value="F:DNA binding"/>
    <property type="evidence" value="ECO:0007669"/>
    <property type="project" value="InterPro"/>
</dbReference>
<dbReference type="GO" id="GO:0003911">
    <property type="term" value="F:DNA ligase (NAD+) activity"/>
    <property type="evidence" value="ECO:0007669"/>
    <property type="project" value="UniProtKB-UniRule"/>
</dbReference>
<dbReference type="GO" id="GO:0046872">
    <property type="term" value="F:metal ion binding"/>
    <property type="evidence" value="ECO:0007669"/>
    <property type="project" value="UniProtKB-KW"/>
</dbReference>
<dbReference type="GO" id="GO:0006281">
    <property type="term" value="P:DNA repair"/>
    <property type="evidence" value="ECO:0007669"/>
    <property type="project" value="UniProtKB-KW"/>
</dbReference>
<dbReference type="GO" id="GO:0006260">
    <property type="term" value="P:DNA replication"/>
    <property type="evidence" value="ECO:0007669"/>
    <property type="project" value="UniProtKB-KW"/>
</dbReference>
<dbReference type="CDD" id="cd17748">
    <property type="entry name" value="BRCT_DNA_ligase_like"/>
    <property type="match status" value="1"/>
</dbReference>
<dbReference type="CDD" id="cd00114">
    <property type="entry name" value="LIGANc"/>
    <property type="match status" value="1"/>
</dbReference>
<dbReference type="FunFam" id="1.10.150.20:FF:000006">
    <property type="entry name" value="DNA ligase"/>
    <property type="match status" value="1"/>
</dbReference>
<dbReference type="FunFam" id="1.10.150.20:FF:000007">
    <property type="entry name" value="DNA ligase"/>
    <property type="match status" value="1"/>
</dbReference>
<dbReference type="FunFam" id="1.10.287.610:FF:000005">
    <property type="entry name" value="DNA ligase"/>
    <property type="match status" value="1"/>
</dbReference>
<dbReference type="FunFam" id="2.40.50.140:FF:000012">
    <property type="entry name" value="DNA ligase"/>
    <property type="match status" value="1"/>
</dbReference>
<dbReference type="FunFam" id="3.30.470.30:FF:000001">
    <property type="entry name" value="DNA ligase"/>
    <property type="match status" value="1"/>
</dbReference>
<dbReference type="FunFam" id="3.40.50.10190:FF:000045">
    <property type="entry name" value="DNA ligase"/>
    <property type="match status" value="1"/>
</dbReference>
<dbReference type="FunFam" id="6.20.10.30:FF:000002">
    <property type="entry name" value="DNA ligase"/>
    <property type="match status" value="1"/>
</dbReference>
<dbReference type="Gene3D" id="6.20.10.30">
    <property type="match status" value="1"/>
</dbReference>
<dbReference type="Gene3D" id="1.10.150.20">
    <property type="entry name" value="5' to 3' exonuclease, C-terminal subdomain"/>
    <property type="match status" value="2"/>
</dbReference>
<dbReference type="Gene3D" id="3.40.50.10190">
    <property type="entry name" value="BRCT domain"/>
    <property type="match status" value="1"/>
</dbReference>
<dbReference type="Gene3D" id="3.30.470.30">
    <property type="entry name" value="DNA ligase/mRNA capping enzyme"/>
    <property type="match status" value="1"/>
</dbReference>
<dbReference type="Gene3D" id="1.10.287.610">
    <property type="entry name" value="Helix hairpin bin"/>
    <property type="match status" value="1"/>
</dbReference>
<dbReference type="Gene3D" id="2.40.50.140">
    <property type="entry name" value="Nucleic acid-binding proteins"/>
    <property type="match status" value="1"/>
</dbReference>
<dbReference type="HAMAP" id="MF_01588">
    <property type="entry name" value="DNA_ligase_A"/>
    <property type="match status" value="1"/>
</dbReference>
<dbReference type="InterPro" id="IPR001357">
    <property type="entry name" value="BRCT_dom"/>
</dbReference>
<dbReference type="InterPro" id="IPR036420">
    <property type="entry name" value="BRCT_dom_sf"/>
</dbReference>
<dbReference type="InterPro" id="IPR041663">
    <property type="entry name" value="DisA/LigA_HHH"/>
</dbReference>
<dbReference type="InterPro" id="IPR001679">
    <property type="entry name" value="DNA_ligase"/>
</dbReference>
<dbReference type="InterPro" id="IPR018239">
    <property type="entry name" value="DNA_ligase_AS"/>
</dbReference>
<dbReference type="InterPro" id="IPR033136">
    <property type="entry name" value="DNA_ligase_CS"/>
</dbReference>
<dbReference type="InterPro" id="IPR013839">
    <property type="entry name" value="DNAligase_adenylation"/>
</dbReference>
<dbReference type="InterPro" id="IPR013840">
    <property type="entry name" value="DNAligase_N"/>
</dbReference>
<dbReference type="InterPro" id="IPR003583">
    <property type="entry name" value="Hlx-hairpin-Hlx_DNA-bd_motif"/>
</dbReference>
<dbReference type="InterPro" id="IPR012340">
    <property type="entry name" value="NA-bd_OB-fold"/>
</dbReference>
<dbReference type="InterPro" id="IPR004150">
    <property type="entry name" value="NAD_DNA_ligase_OB"/>
</dbReference>
<dbReference type="InterPro" id="IPR010994">
    <property type="entry name" value="RuvA_2-like"/>
</dbReference>
<dbReference type="InterPro" id="IPR004149">
    <property type="entry name" value="Znf_DNAligase_C4"/>
</dbReference>
<dbReference type="NCBIfam" id="TIGR00575">
    <property type="entry name" value="dnlj"/>
    <property type="match status" value="1"/>
</dbReference>
<dbReference type="NCBIfam" id="NF005932">
    <property type="entry name" value="PRK07956.1"/>
    <property type="match status" value="1"/>
</dbReference>
<dbReference type="PANTHER" id="PTHR23389">
    <property type="entry name" value="CHROMOSOME TRANSMISSION FIDELITY FACTOR 18"/>
    <property type="match status" value="1"/>
</dbReference>
<dbReference type="PANTHER" id="PTHR23389:SF9">
    <property type="entry name" value="DNA LIGASE"/>
    <property type="match status" value="1"/>
</dbReference>
<dbReference type="Pfam" id="PF00533">
    <property type="entry name" value="BRCT"/>
    <property type="match status" value="1"/>
</dbReference>
<dbReference type="Pfam" id="PF01653">
    <property type="entry name" value="DNA_ligase_aden"/>
    <property type="match status" value="1"/>
</dbReference>
<dbReference type="Pfam" id="PF03120">
    <property type="entry name" value="DNA_ligase_OB"/>
    <property type="match status" value="1"/>
</dbReference>
<dbReference type="Pfam" id="PF03119">
    <property type="entry name" value="DNA_ligase_ZBD"/>
    <property type="match status" value="1"/>
</dbReference>
<dbReference type="Pfam" id="PF12826">
    <property type="entry name" value="HHH_2"/>
    <property type="match status" value="1"/>
</dbReference>
<dbReference type="PIRSF" id="PIRSF001604">
    <property type="entry name" value="LigA"/>
    <property type="match status" value="1"/>
</dbReference>
<dbReference type="SMART" id="SM00292">
    <property type="entry name" value="BRCT"/>
    <property type="match status" value="1"/>
</dbReference>
<dbReference type="SMART" id="SM00278">
    <property type="entry name" value="HhH1"/>
    <property type="match status" value="3"/>
</dbReference>
<dbReference type="SMART" id="SM00532">
    <property type="entry name" value="LIGANc"/>
    <property type="match status" value="1"/>
</dbReference>
<dbReference type="SUPFAM" id="SSF52113">
    <property type="entry name" value="BRCT domain"/>
    <property type="match status" value="1"/>
</dbReference>
<dbReference type="SUPFAM" id="SSF56091">
    <property type="entry name" value="DNA ligase/mRNA capping enzyme, catalytic domain"/>
    <property type="match status" value="1"/>
</dbReference>
<dbReference type="SUPFAM" id="SSF50249">
    <property type="entry name" value="Nucleic acid-binding proteins"/>
    <property type="match status" value="1"/>
</dbReference>
<dbReference type="SUPFAM" id="SSF47781">
    <property type="entry name" value="RuvA domain 2-like"/>
    <property type="match status" value="1"/>
</dbReference>
<dbReference type="PROSITE" id="PS50172">
    <property type="entry name" value="BRCT"/>
    <property type="match status" value="1"/>
</dbReference>
<dbReference type="PROSITE" id="PS01055">
    <property type="entry name" value="DNA_LIGASE_N1"/>
    <property type="match status" value="1"/>
</dbReference>
<dbReference type="PROSITE" id="PS01056">
    <property type="entry name" value="DNA_LIGASE_N2"/>
    <property type="match status" value="1"/>
</dbReference>
<keyword id="KW-0227">DNA damage</keyword>
<keyword id="KW-0234">DNA repair</keyword>
<keyword id="KW-0235">DNA replication</keyword>
<keyword id="KW-0436">Ligase</keyword>
<keyword id="KW-0460">Magnesium</keyword>
<keyword id="KW-0464">Manganese</keyword>
<keyword id="KW-0479">Metal-binding</keyword>
<keyword id="KW-0520">NAD</keyword>
<keyword id="KW-0862">Zinc</keyword>
<comment type="function">
    <text evidence="1">DNA ligase that catalyzes the formation of phosphodiester linkages between 5'-phosphoryl and 3'-hydroxyl groups in double-stranded DNA using NAD as a coenzyme and as the energy source for the reaction. It is essential for DNA replication and repair of damaged DNA.</text>
</comment>
<comment type="catalytic activity">
    <reaction evidence="1">
        <text>NAD(+) + (deoxyribonucleotide)n-3'-hydroxyl + 5'-phospho-(deoxyribonucleotide)m = (deoxyribonucleotide)n+m + AMP + beta-nicotinamide D-nucleotide.</text>
        <dbReference type="EC" id="6.5.1.2"/>
    </reaction>
</comment>
<comment type="cofactor">
    <cofactor evidence="1">
        <name>Mg(2+)</name>
        <dbReference type="ChEBI" id="CHEBI:18420"/>
    </cofactor>
    <cofactor evidence="1">
        <name>Mn(2+)</name>
        <dbReference type="ChEBI" id="CHEBI:29035"/>
    </cofactor>
</comment>
<comment type="similarity">
    <text evidence="1">Belongs to the NAD-dependent DNA ligase family. LigA subfamily.</text>
</comment>
<reference key="1">
    <citation type="journal article" date="2008" name="Antimicrob. Agents Chemother.">
        <title>Mutated response regulator graR is responsible for phenotypic conversion of Staphylococcus aureus from heterogeneous vancomycin-intermediate resistance to vancomycin-intermediate resistance.</title>
        <authorList>
            <person name="Neoh H.-M."/>
            <person name="Cui L."/>
            <person name="Yuzawa H."/>
            <person name="Takeuchi F."/>
            <person name="Matsuo M."/>
            <person name="Hiramatsu K."/>
        </authorList>
    </citation>
    <scope>NUCLEOTIDE SEQUENCE [LARGE SCALE GENOMIC DNA]</scope>
    <source>
        <strain>Mu3 / ATCC 700698</strain>
    </source>
</reference>